<protein>
    <recommendedName>
        <fullName evidence="1">Undecaprenyl-diphosphatase</fullName>
        <ecNumber evidence="1">3.6.1.27</ecNumber>
    </recommendedName>
    <alternativeName>
        <fullName evidence="1">Bacitracin resistance protein</fullName>
    </alternativeName>
    <alternativeName>
        <fullName evidence="1">Undecaprenyl pyrophosphate phosphatase</fullName>
    </alternativeName>
</protein>
<feature type="chain" id="PRO_0000151233" description="Undecaprenyl-diphosphatase">
    <location>
        <begin position="1"/>
        <end position="279"/>
    </location>
</feature>
<feature type="transmembrane region" description="Helical" evidence="1">
    <location>
        <begin position="1"/>
        <end position="21"/>
    </location>
</feature>
<feature type="transmembrane region" description="Helical" evidence="1">
    <location>
        <begin position="39"/>
        <end position="59"/>
    </location>
</feature>
<feature type="transmembrane region" description="Helical" evidence="1">
    <location>
        <begin position="96"/>
        <end position="116"/>
    </location>
</feature>
<feature type="transmembrane region" description="Helical" evidence="1">
    <location>
        <begin position="128"/>
        <end position="148"/>
    </location>
</feature>
<feature type="transmembrane region" description="Helical" evidence="1">
    <location>
        <begin position="155"/>
        <end position="175"/>
    </location>
</feature>
<feature type="transmembrane region" description="Helical" evidence="1">
    <location>
        <begin position="201"/>
        <end position="221"/>
    </location>
</feature>
<feature type="transmembrane region" description="Helical" evidence="1">
    <location>
        <begin position="231"/>
        <end position="251"/>
    </location>
</feature>
<feature type="transmembrane region" description="Helical" evidence="1">
    <location>
        <begin position="259"/>
        <end position="279"/>
    </location>
</feature>
<dbReference type="EC" id="3.6.1.27" evidence="1"/>
<dbReference type="EMBL" id="AE014184">
    <property type="protein sequence ID" value="AAO44412.1"/>
    <property type="molecule type" value="Genomic_DNA"/>
</dbReference>
<dbReference type="SMR" id="Q83GH4"/>
<dbReference type="STRING" id="203267.TWT_315"/>
<dbReference type="KEGG" id="twh:TWT_315"/>
<dbReference type="eggNOG" id="COG1968">
    <property type="taxonomic scope" value="Bacteria"/>
</dbReference>
<dbReference type="HOGENOM" id="CLU_060296_1_0_11"/>
<dbReference type="OrthoDB" id="9808289at2"/>
<dbReference type="Proteomes" id="UP000002200">
    <property type="component" value="Chromosome"/>
</dbReference>
<dbReference type="GO" id="GO:0005886">
    <property type="term" value="C:plasma membrane"/>
    <property type="evidence" value="ECO:0007669"/>
    <property type="project" value="UniProtKB-SubCell"/>
</dbReference>
<dbReference type="GO" id="GO:0050380">
    <property type="term" value="F:undecaprenyl-diphosphatase activity"/>
    <property type="evidence" value="ECO:0007669"/>
    <property type="project" value="UniProtKB-UniRule"/>
</dbReference>
<dbReference type="GO" id="GO:0071555">
    <property type="term" value="P:cell wall organization"/>
    <property type="evidence" value="ECO:0007669"/>
    <property type="project" value="UniProtKB-KW"/>
</dbReference>
<dbReference type="GO" id="GO:0009252">
    <property type="term" value="P:peptidoglycan biosynthetic process"/>
    <property type="evidence" value="ECO:0007669"/>
    <property type="project" value="UniProtKB-KW"/>
</dbReference>
<dbReference type="GO" id="GO:0008360">
    <property type="term" value="P:regulation of cell shape"/>
    <property type="evidence" value="ECO:0007669"/>
    <property type="project" value="UniProtKB-KW"/>
</dbReference>
<dbReference type="GO" id="GO:0046677">
    <property type="term" value="P:response to antibiotic"/>
    <property type="evidence" value="ECO:0007669"/>
    <property type="project" value="UniProtKB-UniRule"/>
</dbReference>
<dbReference type="HAMAP" id="MF_01006">
    <property type="entry name" value="Undec_diphosphatase"/>
    <property type="match status" value="1"/>
</dbReference>
<dbReference type="InterPro" id="IPR003824">
    <property type="entry name" value="UppP"/>
</dbReference>
<dbReference type="PANTHER" id="PTHR30622">
    <property type="entry name" value="UNDECAPRENYL-DIPHOSPHATASE"/>
    <property type="match status" value="1"/>
</dbReference>
<dbReference type="PANTHER" id="PTHR30622:SF4">
    <property type="entry name" value="UNDECAPRENYL-DIPHOSPHATASE"/>
    <property type="match status" value="1"/>
</dbReference>
<dbReference type="Pfam" id="PF02673">
    <property type="entry name" value="BacA"/>
    <property type="match status" value="1"/>
</dbReference>
<proteinExistence type="inferred from homology"/>
<name>UPPP_TROWT</name>
<keyword id="KW-0046">Antibiotic resistance</keyword>
<keyword id="KW-1003">Cell membrane</keyword>
<keyword id="KW-0133">Cell shape</keyword>
<keyword id="KW-0961">Cell wall biogenesis/degradation</keyword>
<keyword id="KW-0378">Hydrolase</keyword>
<keyword id="KW-0472">Membrane</keyword>
<keyword id="KW-0573">Peptidoglycan synthesis</keyword>
<keyword id="KW-1185">Reference proteome</keyword>
<keyword id="KW-0812">Transmembrane</keyword>
<keyword id="KW-1133">Transmembrane helix</keyword>
<organism>
    <name type="scientific">Tropheryma whipplei (strain Twist)</name>
    <name type="common">Whipple's bacillus</name>
    <dbReference type="NCBI Taxonomy" id="203267"/>
    <lineage>
        <taxon>Bacteria</taxon>
        <taxon>Bacillati</taxon>
        <taxon>Actinomycetota</taxon>
        <taxon>Actinomycetes</taxon>
        <taxon>Micrococcales</taxon>
        <taxon>Tropherymataceae</taxon>
        <taxon>Tropheryma</taxon>
    </lineage>
</organism>
<evidence type="ECO:0000255" key="1">
    <source>
        <dbReference type="HAMAP-Rule" id="MF_01006"/>
    </source>
</evidence>
<sequence>MVLEAVLLGIVQGITEFLPISSTAHMYILAKLLNLHVPGRFFLSSVQLGTSFALILYFFKDVKGIISETSRSIYSFIQFGIRQKQGKRNEYTRLGLLLVTGTIPVVLLGFLLVRFVPDGFFSAARNLFTMGVALIVFGLLLGFADALFRRKKGNIFQITFIESVLIGAAQVFAIIPGVSRSGITITTARFLNFDRQLAVRFSFLLSLPVTFIGGMYGLVAGPDTDYYSLGYSLIGAIVSFVVGLLVVSALLRIISKTTFVLFVYYRVLFGLFLVIVSFF</sequence>
<comment type="function">
    <text evidence="1">Catalyzes the dephosphorylation of undecaprenyl diphosphate (UPP). Confers resistance to bacitracin.</text>
</comment>
<comment type="catalytic activity">
    <reaction evidence="1">
        <text>di-trans,octa-cis-undecaprenyl diphosphate + H2O = di-trans,octa-cis-undecaprenyl phosphate + phosphate + H(+)</text>
        <dbReference type="Rhea" id="RHEA:28094"/>
        <dbReference type="ChEBI" id="CHEBI:15377"/>
        <dbReference type="ChEBI" id="CHEBI:15378"/>
        <dbReference type="ChEBI" id="CHEBI:43474"/>
        <dbReference type="ChEBI" id="CHEBI:58405"/>
        <dbReference type="ChEBI" id="CHEBI:60392"/>
        <dbReference type="EC" id="3.6.1.27"/>
    </reaction>
</comment>
<comment type="subcellular location">
    <subcellularLocation>
        <location evidence="1">Cell membrane</location>
        <topology evidence="1">Multi-pass membrane protein</topology>
    </subcellularLocation>
</comment>
<comment type="miscellaneous">
    <text>Bacitracin is thought to be involved in the inhibition of peptidoglycan synthesis by sequestering undecaprenyl diphosphate, thereby reducing the pool of lipid carrier available.</text>
</comment>
<comment type="similarity">
    <text evidence="1">Belongs to the UppP family.</text>
</comment>
<gene>
    <name evidence="1" type="primary">uppP</name>
    <name type="synonym">bacA</name>
    <name type="synonym">upk</name>
    <name type="ordered locus">TWT_315</name>
</gene>
<accession>Q83GH4</accession>
<reference key="1">
    <citation type="journal article" date="2003" name="Genome Res.">
        <title>Tropheryma whipplei twist: a human pathogenic Actinobacteria with a reduced genome.</title>
        <authorList>
            <person name="Raoult D."/>
            <person name="Ogata H."/>
            <person name="Audic S."/>
            <person name="Robert C."/>
            <person name="Suhre K."/>
            <person name="Drancourt M."/>
            <person name="Claverie J.-M."/>
        </authorList>
    </citation>
    <scope>NUCLEOTIDE SEQUENCE [LARGE SCALE GENOMIC DNA]</scope>
    <source>
        <strain>Twist</strain>
    </source>
</reference>